<accession>B7MAB7</accession>
<proteinExistence type="inferred from homology"/>
<name>ZUPT_ECO45</name>
<feature type="chain" id="PRO_1000128948" description="Zinc transporter ZupT">
    <location>
        <begin position="1"/>
        <end position="257"/>
    </location>
</feature>
<feature type="transmembrane region" description="Helical" evidence="1">
    <location>
        <begin position="5"/>
        <end position="25"/>
    </location>
</feature>
<feature type="transmembrane region" description="Helical" evidence="1">
    <location>
        <begin position="32"/>
        <end position="52"/>
    </location>
</feature>
<feature type="transmembrane region" description="Helical" evidence="1">
    <location>
        <begin position="61"/>
        <end position="81"/>
    </location>
</feature>
<feature type="transmembrane region" description="Helical" evidence="1">
    <location>
        <begin position="137"/>
        <end position="157"/>
    </location>
</feature>
<feature type="transmembrane region" description="Helical" evidence="1">
    <location>
        <begin position="171"/>
        <end position="191"/>
    </location>
</feature>
<feature type="transmembrane region" description="Helical" evidence="1">
    <location>
        <begin position="195"/>
        <end position="215"/>
    </location>
</feature>
<feature type="transmembrane region" description="Helical" evidence="1">
    <location>
        <begin position="236"/>
        <end position="256"/>
    </location>
</feature>
<feature type="binding site" description="M2 metal binding site" evidence="1">
    <location>
        <position position="120"/>
    </location>
    <ligand>
        <name>Fe(2+)</name>
        <dbReference type="ChEBI" id="CHEBI:29033"/>
    </ligand>
</feature>
<feature type="binding site" description="M2 metal binding site" evidence="1">
    <location>
        <position position="123"/>
    </location>
    <ligand>
        <name>Fe(2+)</name>
        <dbReference type="ChEBI" id="CHEBI:29033"/>
    </ligand>
</feature>
<feature type="binding site" description="M1 metal binding site" evidence="1">
    <location>
        <position position="123"/>
    </location>
    <ligand>
        <name>Zn(2+)</name>
        <dbReference type="ChEBI" id="CHEBI:29105"/>
    </ligand>
</feature>
<feature type="binding site" description="M1 metal binding site" evidence="1">
    <location>
        <position position="148"/>
    </location>
    <ligand>
        <name>Zn(2+)</name>
        <dbReference type="ChEBI" id="CHEBI:29105"/>
    </ligand>
</feature>
<feature type="binding site" description="M2 metal binding site" evidence="1">
    <location>
        <position position="149"/>
    </location>
    <ligand>
        <name>Fe(2+)</name>
        <dbReference type="ChEBI" id="CHEBI:29033"/>
    </ligand>
</feature>
<feature type="binding site" description="M2 metal binding site" evidence="1">
    <location>
        <position position="152"/>
    </location>
    <ligand>
        <name>Fe(2+)</name>
        <dbReference type="ChEBI" id="CHEBI:29033"/>
    </ligand>
</feature>
<feature type="binding site" description="M1 metal binding site" evidence="1">
    <location>
        <position position="152"/>
    </location>
    <ligand>
        <name>Zn(2+)</name>
        <dbReference type="ChEBI" id="CHEBI:29105"/>
    </ligand>
</feature>
<feature type="binding site" description="M2 metal binding site" evidence="1">
    <location>
        <position position="181"/>
    </location>
    <ligand>
        <name>Fe(2+)</name>
        <dbReference type="ChEBI" id="CHEBI:29033"/>
    </ligand>
</feature>
<dbReference type="EMBL" id="CU928161">
    <property type="protein sequence ID" value="CAR04666.1"/>
    <property type="molecule type" value="Genomic_DNA"/>
</dbReference>
<dbReference type="RefSeq" id="WP_001295627.1">
    <property type="nucleotide sequence ID" value="NC_011742.1"/>
</dbReference>
<dbReference type="SMR" id="B7MAB7"/>
<dbReference type="GeneID" id="93778954"/>
<dbReference type="KEGG" id="ecz:ECS88_3437"/>
<dbReference type="HOGENOM" id="CLU_015114_1_3_6"/>
<dbReference type="Proteomes" id="UP000000747">
    <property type="component" value="Chromosome"/>
</dbReference>
<dbReference type="GO" id="GO:0005886">
    <property type="term" value="C:plasma membrane"/>
    <property type="evidence" value="ECO:0007669"/>
    <property type="project" value="UniProtKB-SubCell"/>
</dbReference>
<dbReference type="GO" id="GO:0046872">
    <property type="term" value="F:metal ion binding"/>
    <property type="evidence" value="ECO:0007669"/>
    <property type="project" value="UniProtKB-KW"/>
</dbReference>
<dbReference type="GO" id="GO:0005385">
    <property type="term" value="F:zinc ion transmembrane transporter activity"/>
    <property type="evidence" value="ECO:0007669"/>
    <property type="project" value="UniProtKB-UniRule"/>
</dbReference>
<dbReference type="HAMAP" id="MF_00548">
    <property type="entry name" value="ZupT"/>
    <property type="match status" value="1"/>
</dbReference>
<dbReference type="InterPro" id="IPR003689">
    <property type="entry name" value="ZIP"/>
</dbReference>
<dbReference type="InterPro" id="IPR023498">
    <property type="entry name" value="Zn_transptr_ZupT"/>
</dbReference>
<dbReference type="NCBIfam" id="NF003243">
    <property type="entry name" value="PRK04201.1"/>
    <property type="match status" value="1"/>
</dbReference>
<dbReference type="PANTHER" id="PTHR11040:SF205">
    <property type="entry name" value="ZINC TRANSPORTER ZUPT"/>
    <property type="match status" value="1"/>
</dbReference>
<dbReference type="PANTHER" id="PTHR11040">
    <property type="entry name" value="ZINC/IRON TRANSPORTER"/>
    <property type="match status" value="1"/>
</dbReference>
<dbReference type="Pfam" id="PF02535">
    <property type="entry name" value="Zip"/>
    <property type="match status" value="2"/>
</dbReference>
<gene>
    <name evidence="1" type="primary">zupT</name>
    <name type="ordered locus">ECS88_3437</name>
</gene>
<protein>
    <recommendedName>
        <fullName evidence="1">Zinc transporter ZupT</fullName>
    </recommendedName>
</protein>
<comment type="function">
    <text evidence="1">Mediates zinc uptake. May also transport other divalent cations.</text>
</comment>
<comment type="catalytic activity">
    <reaction evidence="1">
        <text>Zn(2+)(in) = Zn(2+)(out)</text>
        <dbReference type="Rhea" id="RHEA:29351"/>
        <dbReference type="ChEBI" id="CHEBI:29105"/>
    </reaction>
</comment>
<comment type="subcellular location">
    <subcellularLocation>
        <location evidence="1">Cell inner membrane</location>
        <topology evidence="1">Multi-pass membrane protein</topology>
    </subcellularLocation>
</comment>
<comment type="similarity">
    <text evidence="1">Belongs to the ZIP transporter (TC 2.A.5) family. ZupT subfamily.</text>
</comment>
<evidence type="ECO:0000255" key="1">
    <source>
        <dbReference type="HAMAP-Rule" id="MF_00548"/>
    </source>
</evidence>
<organism>
    <name type="scientific">Escherichia coli O45:K1 (strain S88 / ExPEC)</name>
    <dbReference type="NCBI Taxonomy" id="585035"/>
    <lineage>
        <taxon>Bacteria</taxon>
        <taxon>Pseudomonadati</taxon>
        <taxon>Pseudomonadota</taxon>
        <taxon>Gammaproteobacteria</taxon>
        <taxon>Enterobacterales</taxon>
        <taxon>Enterobacteriaceae</taxon>
        <taxon>Escherichia</taxon>
    </lineage>
</organism>
<keyword id="KW-0997">Cell inner membrane</keyword>
<keyword id="KW-1003">Cell membrane</keyword>
<keyword id="KW-0406">Ion transport</keyword>
<keyword id="KW-0408">Iron</keyword>
<keyword id="KW-0472">Membrane</keyword>
<keyword id="KW-0479">Metal-binding</keyword>
<keyword id="KW-1185">Reference proteome</keyword>
<keyword id="KW-0812">Transmembrane</keyword>
<keyword id="KW-1133">Transmembrane helix</keyword>
<keyword id="KW-0813">Transport</keyword>
<keyword id="KW-0862">Zinc</keyword>
<keyword id="KW-0864">Zinc transport</keyword>
<reference key="1">
    <citation type="journal article" date="2009" name="PLoS Genet.">
        <title>Organised genome dynamics in the Escherichia coli species results in highly diverse adaptive paths.</title>
        <authorList>
            <person name="Touchon M."/>
            <person name="Hoede C."/>
            <person name="Tenaillon O."/>
            <person name="Barbe V."/>
            <person name="Baeriswyl S."/>
            <person name="Bidet P."/>
            <person name="Bingen E."/>
            <person name="Bonacorsi S."/>
            <person name="Bouchier C."/>
            <person name="Bouvet O."/>
            <person name="Calteau A."/>
            <person name="Chiapello H."/>
            <person name="Clermont O."/>
            <person name="Cruveiller S."/>
            <person name="Danchin A."/>
            <person name="Diard M."/>
            <person name="Dossat C."/>
            <person name="Karoui M.E."/>
            <person name="Frapy E."/>
            <person name="Garry L."/>
            <person name="Ghigo J.M."/>
            <person name="Gilles A.M."/>
            <person name="Johnson J."/>
            <person name="Le Bouguenec C."/>
            <person name="Lescat M."/>
            <person name="Mangenot S."/>
            <person name="Martinez-Jehanne V."/>
            <person name="Matic I."/>
            <person name="Nassif X."/>
            <person name="Oztas S."/>
            <person name="Petit M.A."/>
            <person name="Pichon C."/>
            <person name="Rouy Z."/>
            <person name="Ruf C.S."/>
            <person name="Schneider D."/>
            <person name="Tourret J."/>
            <person name="Vacherie B."/>
            <person name="Vallenet D."/>
            <person name="Medigue C."/>
            <person name="Rocha E.P.C."/>
            <person name="Denamur E."/>
        </authorList>
    </citation>
    <scope>NUCLEOTIDE SEQUENCE [LARGE SCALE GENOMIC DNA]</scope>
    <source>
        <strain>S88 / ExPEC</strain>
    </source>
</reference>
<sequence length="257" mass="26485">MSVPLILTILAGAATFIGAFLGVLGQKPSNRLLAFSLGFAAGIMLLISLMEMLPAALAAEGMSPVLGYGMFIFGLLGYFGLDRMLPHAHPQDLMQKSVQPLPKSIKRTAILLTLGISLHNFPEGIATFVTASSNLELGFGIALAVALHNIPEGLAVAGPVYAATGSKRTAILWAGISGLAEILGGVLAWLILGSMISPVVMAAIMAAVAGIMVALSVDELMPLAKEIDPNNNPSYGVLCGMSVMGFSLVLLQTAGIG</sequence>